<keyword id="KW-0963">Cytoplasm</keyword>
<keyword id="KW-0489">Methyltransferase</keyword>
<keyword id="KW-0698">rRNA processing</keyword>
<keyword id="KW-0949">S-adenosyl-L-methionine</keyword>
<keyword id="KW-0808">Transferase</keyword>
<feature type="chain" id="PRO_0000335433" description="Ribosomal RNA small subunit methyltransferase G">
    <location>
        <begin position="1"/>
        <end position="212"/>
    </location>
</feature>
<feature type="binding site" evidence="1">
    <location>
        <position position="73"/>
    </location>
    <ligand>
        <name>S-adenosyl-L-methionine</name>
        <dbReference type="ChEBI" id="CHEBI:59789"/>
    </ligand>
</feature>
<feature type="binding site" evidence="1">
    <location>
        <position position="78"/>
    </location>
    <ligand>
        <name>S-adenosyl-L-methionine</name>
        <dbReference type="ChEBI" id="CHEBI:59789"/>
    </ligand>
</feature>
<feature type="binding site" evidence="1">
    <location>
        <begin position="124"/>
        <end position="125"/>
    </location>
    <ligand>
        <name>S-adenosyl-L-methionine</name>
        <dbReference type="ChEBI" id="CHEBI:59789"/>
    </ligand>
</feature>
<feature type="binding site" evidence="1">
    <location>
        <position position="137"/>
    </location>
    <ligand>
        <name>S-adenosyl-L-methionine</name>
        <dbReference type="ChEBI" id="CHEBI:59789"/>
    </ligand>
</feature>
<name>RSMG_KARMG</name>
<gene>
    <name evidence="1" type="primary">rsmG</name>
    <name type="ordered locus">SMGWSS_209</name>
</gene>
<comment type="function">
    <text evidence="1">Specifically methylates the N7 position of a guanine in 16S rRNA.</text>
</comment>
<comment type="subcellular location">
    <subcellularLocation>
        <location evidence="1">Cytoplasm</location>
    </subcellularLocation>
</comment>
<comment type="similarity">
    <text evidence="1">Belongs to the methyltransferase superfamily. RNA methyltransferase RsmG family.</text>
</comment>
<accession>A8Z655</accession>
<proteinExistence type="inferred from homology"/>
<organism>
    <name type="scientific">Karelsulcia muelleri (strain GWSS)</name>
    <name type="common">Sulcia muelleri</name>
    <dbReference type="NCBI Taxonomy" id="444179"/>
    <lineage>
        <taxon>Bacteria</taxon>
        <taxon>Pseudomonadati</taxon>
        <taxon>Bacteroidota</taxon>
        <taxon>Flavobacteriia</taxon>
        <taxon>Flavobacteriales</taxon>
        <taxon>Candidatus Karelsulcia</taxon>
    </lineage>
</organism>
<protein>
    <recommendedName>
        <fullName evidence="1">Ribosomal RNA small subunit methyltransferase G</fullName>
        <ecNumber evidence="1">2.1.1.-</ecNumber>
    </recommendedName>
    <alternativeName>
        <fullName evidence="1">16S rRNA 7-methylguanosine methyltransferase</fullName>
        <shortName evidence="1">16S rRNA m7G methyltransferase</shortName>
    </alternativeName>
</protein>
<dbReference type="EC" id="2.1.1.-" evidence="1"/>
<dbReference type="EMBL" id="CP000770">
    <property type="protein sequence ID" value="ABS30606.1"/>
    <property type="molecule type" value="Genomic_DNA"/>
</dbReference>
<dbReference type="SMR" id="A8Z655"/>
<dbReference type="STRING" id="444179.SMGWSS_209"/>
<dbReference type="KEGG" id="smg:SMGWSS_209"/>
<dbReference type="HOGENOM" id="CLU_065341_2_2_10"/>
<dbReference type="Proteomes" id="UP000000781">
    <property type="component" value="Chromosome"/>
</dbReference>
<dbReference type="GO" id="GO:0005829">
    <property type="term" value="C:cytosol"/>
    <property type="evidence" value="ECO:0007669"/>
    <property type="project" value="TreeGrafter"/>
</dbReference>
<dbReference type="GO" id="GO:0070043">
    <property type="term" value="F:rRNA (guanine-N7-)-methyltransferase activity"/>
    <property type="evidence" value="ECO:0007669"/>
    <property type="project" value="UniProtKB-UniRule"/>
</dbReference>
<dbReference type="Gene3D" id="3.40.50.150">
    <property type="entry name" value="Vaccinia Virus protein VP39"/>
    <property type="match status" value="1"/>
</dbReference>
<dbReference type="HAMAP" id="MF_00074">
    <property type="entry name" value="16SrRNA_methyltr_G"/>
    <property type="match status" value="1"/>
</dbReference>
<dbReference type="InterPro" id="IPR003682">
    <property type="entry name" value="rRNA_ssu_MeTfrase_G"/>
</dbReference>
<dbReference type="InterPro" id="IPR029063">
    <property type="entry name" value="SAM-dependent_MTases_sf"/>
</dbReference>
<dbReference type="NCBIfam" id="TIGR00138">
    <property type="entry name" value="rsmG_gidB"/>
    <property type="match status" value="1"/>
</dbReference>
<dbReference type="PANTHER" id="PTHR31760">
    <property type="entry name" value="S-ADENOSYL-L-METHIONINE-DEPENDENT METHYLTRANSFERASES SUPERFAMILY PROTEIN"/>
    <property type="match status" value="1"/>
</dbReference>
<dbReference type="PANTHER" id="PTHR31760:SF0">
    <property type="entry name" value="S-ADENOSYL-L-METHIONINE-DEPENDENT METHYLTRANSFERASES SUPERFAMILY PROTEIN"/>
    <property type="match status" value="1"/>
</dbReference>
<dbReference type="Pfam" id="PF02527">
    <property type="entry name" value="GidB"/>
    <property type="match status" value="1"/>
</dbReference>
<dbReference type="PIRSF" id="PIRSF003078">
    <property type="entry name" value="GidB"/>
    <property type="match status" value="1"/>
</dbReference>
<dbReference type="SUPFAM" id="SSF53335">
    <property type="entry name" value="S-adenosyl-L-methionine-dependent methyltransferases"/>
    <property type="match status" value="1"/>
</dbReference>
<evidence type="ECO:0000255" key="1">
    <source>
        <dbReference type="HAMAP-Rule" id="MF_00074"/>
    </source>
</evidence>
<reference key="1">
    <citation type="journal article" date="2007" name="Proc. Natl. Acad. Sci. U.S.A.">
        <title>Parallel genomic evolution and metabolic interdependence in an ancient symbiosis.</title>
        <authorList>
            <person name="McCutcheon J.P."/>
            <person name="Moran N.A."/>
        </authorList>
    </citation>
    <scope>NUCLEOTIDE SEQUENCE [LARGE SCALE GENOMIC DNA]</scope>
    <source>
        <strain>GWSS</strain>
    </source>
</reference>
<sequence>MKERIFNKYFPDLDKSIIKKFIKLYKIHKFFNKKINIISNNSLNFFYERHILHSLCVYKICYFLNKSIIIDVGTGGGFPGIPLALLFNKTKFILIDSIEKKIKIINLIIKELHLKNVYVKCTRIENFHNKCNFIIGRAVTKLPNFIRLVKKNFLFKKKNKINNGILYLKGGEFENEKNNQYLYIKYNIYNFLKKFFFKKKLFIFLLFNIKII</sequence>